<feature type="chain" id="PRO_0000137075" description="Nucleoside diphosphate kinase">
    <location>
        <begin position="1"/>
        <end position="142"/>
    </location>
</feature>
<feature type="active site" description="Pros-phosphohistidine intermediate" evidence="1">
    <location>
        <position position="117"/>
    </location>
</feature>
<feature type="binding site" evidence="1">
    <location>
        <position position="11"/>
    </location>
    <ligand>
        <name>ATP</name>
        <dbReference type="ChEBI" id="CHEBI:30616"/>
    </ligand>
</feature>
<feature type="binding site" evidence="1">
    <location>
        <position position="59"/>
    </location>
    <ligand>
        <name>ATP</name>
        <dbReference type="ChEBI" id="CHEBI:30616"/>
    </ligand>
</feature>
<feature type="binding site" evidence="1">
    <location>
        <position position="87"/>
    </location>
    <ligand>
        <name>ATP</name>
        <dbReference type="ChEBI" id="CHEBI:30616"/>
    </ligand>
</feature>
<feature type="binding site" evidence="1">
    <location>
        <position position="93"/>
    </location>
    <ligand>
        <name>ATP</name>
        <dbReference type="ChEBI" id="CHEBI:30616"/>
    </ligand>
</feature>
<feature type="binding site" evidence="1">
    <location>
        <position position="104"/>
    </location>
    <ligand>
        <name>ATP</name>
        <dbReference type="ChEBI" id="CHEBI:30616"/>
    </ligand>
</feature>
<feature type="binding site" evidence="1">
    <location>
        <position position="114"/>
    </location>
    <ligand>
        <name>ATP</name>
        <dbReference type="ChEBI" id="CHEBI:30616"/>
    </ligand>
</feature>
<gene>
    <name evidence="1" type="primary">ndk</name>
    <name type="ordered locus">WIGBR5700</name>
</gene>
<name>NDK_WIGBR</name>
<dbReference type="EC" id="2.7.4.6" evidence="1"/>
<dbReference type="EMBL" id="BA000021">
    <property type="protein sequence ID" value="BAC24716.1"/>
    <property type="molecule type" value="Genomic_DNA"/>
</dbReference>
<dbReference type="SMR" id="Q8D1Y6"/>
<dbReference type="STRING" id="36870.gene:10369079"/>
<dbReference type="KEGG" id="wbr:ndk"/>
<dbReference type="eggNOG" id="COG0105">
    <property type="taxonomic scope" value="Bacteria"/>
</dbReference>
<dbReference type="HOGENOM" id="CLU_060216_8_1_6"/>
<dbReference type="OrthoDB" id="9801161at2"/>
<dbReference type="Proteomes" id="UP000000562">
    <property type="component" value="Chromosome"/>
</dbReference>
<dbReference type="GO" id="GO:0005737">
    <property type="term" value="C:cytoplasm"/>
    <property type="evidence" value="ECO:0007669"/>
    <property type="project" value="UniProtKB-SubCell"/>
</dbReference>
<dbReference type="GO" id="GO:0005524">
    <property type="term" value="F:ATP binding"/>
    <property type="evidence" value="ECO:0007669"/>
    <property type="project" value="UniProtKB-UniRule"/>
</dbReference>
<dbReference type="GO" id="GO:0046872">
    <property type="term" value="F:metal ion binding"/>
    <property type="evidence" value="ECO:0007669"/>
    <property type="project" value="UniProtKB-KW"/>
</dbReference>
<dbReference type="GO" id="GO:0004550">
    <property type="term" value="F:nucleoside diphosphate kinase activity"/>
    <property type="evidence" value="ECO:0007669"/>
    <property type="project" value="UniProtKB-UniRule"/>
</dbReference>
<dbReference type="GO" id="GO:0006241">
    <property type="term" value="P:CTP biosynthetic process"/>
    <property type="evidence" value="ECO:0007669"/>
    <property type="project" value="UniProtKB-UniRule"/>
</dbReference>
<dbReference type="GO" id="GO:0006183">
    <property type="term" value="P:GTP biosynthetic process"/>
    <property type="evidence" value="ECO:0007669"/>
    <property type="project" value="UniProtKB-UniRule"/>
</dbReference>
<dbReference type="GO" id="GO:0006228">
    <property type="term" value="P:UTP biosynthetic process"/>
    <property type="evidence" value="ECO:0007669"/>
    <property type="project" value="UniProtKB-UniRule"/>
</dbReference>
<dbReference type="CDD" id="cd04413">
    <property type="entry name" value="NDPk_I"/>
    <property type="match status" value="1"/>
</dbReference>
<dbReference type="FunFam" id="3.30.70.141:FF:000017">
    <property type="entry name" value="Nucleoside diphosphate kinase"/>
    <property type="match status" value="1"/>
</dbReference>
<dbReference type="Gene3D" id="3.30.70.141">
    <property type="entry name" value="Nucleoside diphosphate kinase-like domain"/>
    <property type="match status" value="1"/>
</dbReference>
<dbReference type="HAMAP" id="MF_00451">
    <property type="entry name" value="NDP_kinase"/>
    <property type="match status" value="1"/>
</dbReference>
<dbReference type="InterPro" id="IPR034907">
    <property type="entry name" value="NDK-like_dom"/>
</dbReference>
<dbReference type="InterPro" id="IPR036850">
    <property type="entry name" value="NDK-like_dom_sf"/>
</dbReference>
<dbReference type="InterPro" id="IPR001564">
    <property type="entry name" value="Nucleoside_diP_kinase"/>
</dbReference>
<dbReference type="InterPro" id="IPR023005">
    <property type="entry name" value="Nucleoside_diP_kinase_AS"/>
</dbReference>
<dbReference type="NCBIfam" id="NF001908">
    <property type="entry name" value="PRK00668.1"/>
    <property type="match status" value="1"/>
</dbReference>
<dbReference type="PANTHER" id="PTHR46161">
    <property type="entry name" value="NUCLEOSIDE DIPHOSPHATE KINASE"/>
    <property type="match status" value="1"/>
</dbReference>
<dbReference type="PANTHER" id="PTHR46161:SF3">
    <property type="entry name" value="NUCLEOSIDE DIPHOSPHATE KINASE DDB_G0292928-RELATED"/>
    <property type="match status" value="1"/>
</dbReference>
<dbReference type="Pfam" id="PF00334">
    <property type="entry name" value="NDK"/>
    <property type="match status" value="1"/>
</dbReference>
<dbReference type="PRINTS" id="PR01243">
    <property type="entry name" value="NUCDPKINASE"/>
</dbReference>
<dbReference type="SMART" id="SM00562">
    <property type="entry name" value="NDK"/>
    <property type="match status" value="1"/>
</dbReference>
<dbReference type="SUPFAM" id="SSF54919">
    <property type="entry name" value="Nucleoside diphosphate kinase, NDK"/>
    <property type="match status" value="1"/>
</dbReference>
<dbReference type="PROSITE" id="PS00469">
    <property type="entry name" value="NDPK"/>
    <property type="match status" value="1"/>
</dbReference>
<dbReference type="PROSITE" id="PS51374">
    <property type="entry name" value="NDPK_LIKE"/>
    <property type="match status" value="1"/>
</dbReference>
<organism>
    <name type="scientific">Wigglesworthia glossinidia brevipalpis</name>
    <dbReference type="NCBI Taxonomy" id="36870"/>
    <lineage>
        <taxon>Bacteria</taxon>
        <taxon>Pseudomonadati</taxon>
        <taxon>Pseudomonadota</taxon>
        <taxon>Gammaproteobacteria</taxon>
        <taxon>Enterobacterales</taxon>
        <taxon>Erwiniaceae</taxon>
        <taxon>Wigglesworthia</taxon>
    </lineage>
</organism>
<protein>
    <recommendedName>
        <fullName evidence="1">Nucleoside diphosphate kinase</fullName>
        <shortName evidence="1">NDK</shortName>
        <shortName evidence="1">NDP kinase</shortName>
        <ecNumber evidence="1">2.7.4.6</ecNumber>
    </recommendedName>
    <alternativeName>
        <fullName evidence="1">Nucleoside-2-P kinase</fullName>
    </alternativeName>
</protein>
<accession>Q8D1Y6</accession>
<proteinExistence type="inferred from homology"/>
<comment type="function">
    <text evidence="1">Major role in the synthesis of nucleoside triphosphates other than ATP. The ATP gamma phosphate is transferred to the NDP beta phosphate via a ping-pong mechanism, using a phosphorylated active-site intermediate.</text>
</comment>
<comment type="catalytic activity">
    <reaction evidence="1">
        <text>a 2'-deoxyribonucleoside 5'-diphosphate + ATP = a 2'-deoxyribonucleoside 5'-triphosphate + ADP</text>
        <dbReference type="Rhea" id="RHEA:44640"/>
        <dbReference type="ChEBI" id="CHEBI:30616"/>
        <dbReference type="ChEBI" id="CHEBI:61560"/>
        <dbReference type="ChEBI" id="CHEBI:73316"/>
        <dbReference type="ChEBI" id="CHEBI:456216"/>
        <dbReference type="EC" id="2.7.4.6"/>
    </reaction>
</comment>
<comment type="catalytic activity">
    <reaction evidence="1">
        <text>a ribonucleoside 5'-diphosphate + ATP = a ribonucleoside 5'-triphosphate + ADP</text>
        <dbReference type="Rhea" id="RHEA:18113"/>
        <dbReference type="ChEBI" id="CHEBI:30616"/>
        <dbReference type="ChEBI" id="CHEBI:57930"/>
        <dbReference type="ChEBI" id="CHEBI:61557"/>
        <dbReference type="ChEBI" id="CHEBI:456216"/>
        <dbReference type="EC" id="2.7.4.6"/>
    </reaction>
</comment>
<comment type="cofactor">
    <cofactor evidence="1">
        <name>Mg(2+)</name>
        <dbReference type="ChEBI" id="CHEBI:18420"/>
    </cofactor>
</comment>
<comment type="subunit">
    <text evidence="1">Homotetramer.</text>
</comment>
<comment type="subcellular location">
    <subcellularLocation>
        <location evidence="1">Cytoplasm</location>
    </subcellularLocation>
</comment>
<comment type="similarity">
    <text evidence="1">Belongs to the NDK family.</text>
</comment>
<keyword id="KW-0067">ATP-binding</keyword>
<keyword id="KW-0963">Cytoplasm</keyword>
<keyword id="KW-0418">Kinase</keyword>
<keyword id="KW-0460">Magnesium</keyword>
<keyword id="KW-0479">Metal-binding</keyword>
<keyword id="KW-0546">Nucleotide metabolism</keyword>
<keyword id="KW-0547">Nucleotide-binding</keyword>
<keyword id="KW-0597">Phosphoprotein</keyword>
<keyword id="KW-1185">Reference proteome</keyword>
<keyword id="KW-0808">Transferase</keyword>
<reference key="1">
    <citation type="journal article" date="2002" name="Nat. Genet.">
        <title>Genome sequence of the endocellular obligate symbiont of tsetse flies, Wigglesworthia glossinidia.</title>
        <authorList>
            <person name="Akman L."/>
            <person name="Yamashita A."/>
            <person name="Watanabe H."/>
            <person name="Oshima K."/>
            <person name="Shiba T."/>
            <person name="Hattori M."/>
            <person name="Aksoy S."/>
        </authorList>
    </citation>
    <scope>NUCLEOTIDE SEQUENCE [LARGE SCALE GENOMIC DNA]</scope>
</reference>
<sequence>MKIEQTLSIIKPNIISNNFIGNIINRLEQAKLYIIASKMIKLSWKEAVSFYIEHKNKSFFSDLINFMISHPIIVQILEGENAIKRNREIMGNTNPKIALAGTLRSDFSNDIIKNGVHGSDSEESADREIKFFFKKDRIFSRI</sequence>
<evidence type="ECO:0000255" key="1">
    <source>
        <dbReference type="HAMAP-Rule" id="MF_00451"/>
    </source>
</evidence>